<organism>
    <name type="scientific">Salmonella gallinarum (strain 287/91 / NCTC 13346)</name>
    <dbReference type="NCBI Taxonomy" id="550538"/>
    <lineage>
        <taxon>Bacteria</taxon>
        <taxon>Pseudomonadati</taxon>
        <taxon>Pseudomonadota</taxon>
        <taxon>Gammaproteobacteria</taxon>
        <taxon>Enterobacterales</taxon>
        <taxon>Enterobacteriaceae</taxon>
        <taxon>Salmonella</taxon>
    </lineage>
</organism>
<reference key="1">
    <citation type="journal article" date="2008" name="Genome Res.">
        <title>Comparative genome analysis of Salmonella enteritidis PT4 and Salmonella gallinarum 287/91 provides insights into evolutionary and host adaptation pathways.</title>
        <authorList>
            <person name="Thomson N.R."/>
            <person name="Clayton D.J."/>
            <person name="Windhorst D."/>
            <person name="Vernikos G."/>
            <person name="Davidson S."/>
            <person name="Churcher C."/>
            <person name="Quail M.A."/>
            <person name="Stevens M."/>
            <person name="Jones M.A."/>
            <person name="Watson M."/>
            <person name="Barron A."/>
            <person name="Layton A."/>
            <person name="Pickard D."/>
            <person name="Kingsley R.A."/>
            <person name="Bignell A."/>
            <person name="Clark L."/>
            <person name="Harris B."/>
            <person name="Ormond D."/>
            <person name="Abdellah Z."/>
            <person name="Brooks K."/>
            <person name="Cherevach I."/>
            <person name="Chillingworth T."/>
            <person name="Woodward J."/>
            <person name="Norberczak H."/>
            <person name="Lord A."/>
            <person name="Arrowsmith C."/>
            <person name="Jagels K."/>
            <person name="Moule S."/>
            <person name="Mungall K."/>
            <person name="Saunders M."/>
            <person name="Whitehead S."/>
            <person name="Chabalgoity J.A."/>
            <person name="Maskell D."/>
            <person name="Humphreys T."/>
            <person name="Roberts M."/>
            <person name="Barrow P.A."/>
            <person name="Dougan G."/>
            <person name="Parkhill J."/>
        </authorList>
    </citation>
    <scope>NUCLEOTIDE SEQUENCE [LARGE SCALE GENOMIC DNA]</scope>
    <source>
        <strain>287/91 / NCTC 13346</strain>
    </source>
</reference>
<accession>B5RH25</accession>
<evidence type="ECO:0000255" key="1">
    <source>
        <dbReference type="HAMAP-Rule" id="MF_01367"/>
    </source>
</evidence>
<evidence type="ECO:0000305" key="2"/>
<sequence length="123" mass="13568">MIQEQTMLNVADNSGARRVMCIKVLGGSHRRYAGVGDIIKITIKEAIPRGKVKKGDVLKAVVVRTKKGVRRPDGSVIRFDGNACVILNNNSEQPIGTRIFGPVTRELRNEKFMKIISLAPEVL</sequence>
<proteinExistence type="inferred from homology"/>
<protein>
    <recommendedName>
        <fullName evidence="1">Large ribosomal subunit protein uL14</fullName>
    </recommendedName>
    <alternativeName>
        <fullName evidence="2">50S ribosomal protein L14</fullName>
    </alternativeName>
</protein>
<dbReference type="EMBL" id="AM933173">
    <property type="protein sequence ID" value="CAR39779.1"/>
    <property type="molecule type" value="Genomic_DNA"/>
</dbReference>
<dbReference type="RefSeq" id="WP_000613954.1">
    <property type="nucleotide sequence ID" value="NC_011274.1"/>
</dbReference>
<dbReference type="SMR" id="B5RH25"/>
<dbReference type="GeneID" id="98390432"/>
<dbReference type="KEGG" id="seg:SG4009"/>
<dbReference type="HOGENOM" id="CLU_095071_2_1_6"/>
<dbReference type="Proteomes" id="UP000008321">
    <property type="component" value="Chromosome"/>
</dbReference>
<dbReference type="GO" id="GO:0022625">
    <property type="term" value="C:cytosolic large ribosomal subunit"/>
    <property type="evidence" value="ECO:0007669"/>
    <property type="project" value="TreeGrafter"/>
</dbReference>
<dbReference type="GO" id="GO:0070180">
    <property type="term" value="F:large ribosomal subunit rRNA binding"/>
    <property type="evidence" value="ECO:0007669"/>
    <property type="project" value="TreeGrafter"/>
</dbReference>
<dbReference type="GO" id="GO:0003735">
    <property type="term" value="F:structural constituent of ribosome"/>
    <property type="evidence" value="ECO:0007669"/>
    <property type="project" value="InterPro"/>
</dbReference>
<dbReference type="GO" id="GO:0006412">
    <property type="term" value="P:translation"/>
    <property type="evidence" value="ECO:0007669"/>
    <property type="project" value="UniProtKB-UniRule"/>
</dbReference>
<dbReference type="CDD" id="cd00337">
    <property type="entry name" value="Ribosomal_uL14"/>
    <property type="match status" value="1"/>
</dbReference>
<dbReference type="FunFam" id="2.40.150.20:FF:000001">
    <property type="entry name" value="50S ribosomal protein L14"/>
    <property type="match status" value="1"/>
</dbReference>
<dbReference type="Gene3D" id="2.40.150.20">
    <property type="entry name" value="Ribosomal protein L14"/>
    <property type="match status" value="1"/>
</dbReference>
<dbReference type="HAMAP" id="MF_01367">
    <property type="entry name" value="Ribosomal_uL14"/>
    <property type="match status" value="1"/>
</dbReference>
<dbReference type="InterPro" id="IPR000218">
    <property type="entry name" value="Ribosomal_uL14"/>
</dbReference>
<dbReference type="InterPro" id="IPR005745">
    <property type="entry name" value="Ribosomal_uL14_bac-type"/>
</dbReference>
<dbReference type="InterPro" id="IPR019972">
    <property type="entry name" value="Ribosomal_uL14_CS"/>
</dbReference>
<dbReference type="InterPro" id="IPR036853">
    <property type="entry name" value="Ribosomal_uL14_sf"/>
</dbReference>
<dbReference type="NCBIfam" id="TIGR01067">
    <property type="entry name" value="rplN_bact"/>
    <property type="match status" value="1"/>
</dbReference>
<dbReference type="PANTHER" id="PTHR11761">
    <property type="entry name" value="50S/60S RIBOSOMAL PROTEIN L14/L23"/>
    <property type="match status" value="1"/>
</dbReference>
<dbReference type="PANTHER" id="PTHR11761:SF3">
    <property type="entry name" value="LARGE RIBOSOMAL SUBUNIT PROTEIN UL14M"/>
    <property type="match status" value="1"/>
</dbReference>
<dbReference type="Pfam" id="PF00238">
    <property type="entry name" value="Ribosomal_L14"/>
    <property type="match status" value="1"/>
</dbReference>
<dbReference type="SMART" id="SM01374">
    <property type="entry name" value="Ribosomal_L14"/>
    <property type="match status" value="1"/>
</dbReference>
<dbReference type="SUPFAM" id="SSF50193">
    <property type="entry name" value="Ribosomal protein L14"/>
    <property type="match status" value="1"/>
</dbReference>
<dbReference type="PROSITE" id="PS00049">
    <property type="entry name" value="RIBOSOMAL_L14"/>
    <property type="match status" value="1"/>
</dbReference>
<feature type="chain" id="PRO_1000144324" description="Large ribosomal subunit protein uL14">
    <location>
        <begin position="1"/>
        <end position="123"/>
    </location>
</feature>
<keyword id="KW-0687">Ribonucleoprotein</keyword>
<keyword id="KW-0689">Ribosomal protein</keyword>
<keyword id="KW-0694">RNA-binding</keyword>
<keyword id="KW-0699">rRNA-binding</keyword>
<name>RL14_SALG2</name>
<comment type="function">
    <text evidence="1">Binds to 23S rRNA. Forms part of two intersubunit bridges in the 70S ribosome.</text>
</comment>
<comment type="subunit">
    <text evidence="1">Part of the 50S ribosomal subunit. Forms a cluster with proteins L3 and L19. In the 70S ribosome, L14 and L19 interact and together make contacts with the 16S rRNA in bridges B5 and B8.</text>
</comment>
<comment type="similarity">
    <text evidence="1">Belongs to the universal ribosomal protein uL14 family.</text>
</comment>
<gene>
    <name evidence="1" type="primary">rplN</name>
    <name type="ordered locus">SG4009</name>
</gene>